<sequence length="315" mass="35013">MLDSKLKAPVFTVRTQGREYGEFVLEPLERGFGVTLGNPLRRILLSSIPGTAVTSVYIEDVLHEFSTIPGVKEDVVEIILNLKELVVRFLNPSLQTVTLLLKAEGPKEVKARDFLPVADVEIMNPDLHIATLEEGGRLNMEVRVDRGVGYVPAEKHGIKDRINAIPVDAVFSPVRRVAFQVEDTRLGQRTDLDKLTLRIWTDGSVTPLEALNQAVEILREHLTYFSNPQAAAVAAPEEAKEPEAPPEQEEELDLPLEELGLSTRVLHSLKEEGIESVRALLALNLKDLKNIPGIGERSLEEIKEALEKKGFTLKE</sequence>
<feature type="chain" id="PRO_0000175407" description="DNA-directed RNA polymerase subunit alpha">
    <location>
        <begin position="1"/>
        <end position="315"/>
    </location>
</feature>
<feature type="region of interest" description="Alpha N-terminal domain (alpha-NTD)" evidence="1">
    <location>
        <begin position="1"/>
        <end position="229"/>
    </location>
</feature>
<feature type="region of interest" description="Alpha C-terminal domain (alpha-CTD)" evidence="1">
    <location>
        <begin position="247"/>
        <end position="315"/>
    </location>
</feature>
<organism>
    <name type="scientific">Thermus thermophilus (strain ATCC BAA-163 / DSM 7039 / HB27)</name>
    <dbReference type="NCBI Taxonomy" id="262724"/>
    <lineage>
        <taxon>Bacteria</taxon>
        <taxon>Thermotogati</taxon>
        <taxon>Deinococcota</taxon>
        <taxon>Deinococci</taxon>
        <taxon>Thermales</taxon>
        <taxon>Thermaceae</taxon>
        <taxon>Thermus</taxon>
    </lineage>
</organism>
<reference key="1">
    <citation type="journal article" date="2004" name="Nat. Biotechnol.">
        <title>The genome sequence of the extreme thermophile Thermus thermophilus.</title>
        <authorList>
            <person name="Henne A."/>
            <person name="Brueggemann H."/>
            <person name="Raasch C."/>
            <person name="Wiezer A."/>
            <person name="Hartsch T."/>
            <person name="Liesegang H."/>
            <person name="Johann A."/>
            <person name="Lienard T."/>
            <person name="Gohl O."/>
            <person name="Martinez-Arias R."/>
            <person name="Jacobi C."/>
            <person name="Starkuviene V."/>
            <person name="Schlenczeck S."/>
            <person name="Dencker S."/>
            <person name="Huber R."/>
            <person name="Klenk H.-P."/>
            <person name="Kramer W."/>
            <person name="Merkl R."/>
            <person name="Gottschalk G."/>
            <person name="Fritz H.-J."/>
        </authorList>
    </citation>
    <scope>NUCLEOTIDE SEQUENCE [LARGE SCALE GENOMIC DNA]</scope>
    <source>
        <strain>ATCC BAA-163 / DSM 7039 / HB27</strain>
    </source>
</reference>
<name>RPOA_THET2</name>
<gene>
    <name evidence="1" type="primary">rpoA</name>
    <name type="ordered locus">TT_C1300</name>
</gene>
<proteinExistence type="inferred from homology"/>
<evidence type="ECO:0000255" key="1">
    <source>
        <dbReference type="HAMAP-Rule" id="MF_00059"/>
    </source>
</evidence>
<protein>
    <recommendedName>
        <fullName evidence="1">DNA-directed RNA polymerase subunit alpha</fullName>
        <shortName evidence="1">RNAP subunit alpha</shortName>
        <ecNumber evidence="1">2.7.7.6</ecNumber>
    </recommendedName>
    <alternativeName>
        <fullName evidence="1">RNA polymerase subunit alpha</fullName>
    </alternativeName>
    <alternativeName>
        <fullName evidence="1">Transcriptase subunit alpha</fullName>
    </alternativeName>
</protein>
<comment type="function">
    <text evidence="1">DNA-dependent RNA polymerase catalyzes the transcription of DNA into RNA using the four ribonucleoside triphosphates as substrates.</text>
</comment>
<comment type="catalytic activity">
    <reaction evidence="1">
        <text>RNA(n) + a ribonucleoside 5'-triphosphate = RNA(n+1) + diphosphate</text>
        <dbReference type="Rhea" id="RHEA:21248"/>
        <dbReference type="Rhea" id="RHEA-COMP:14527"/>
        <dbReference type="Rhea" id="RHEA-COMP:17342"/>
        <dbReference type="ChEBI" id="CHEBI:33019"/>
        <dbReference type="ChEBI" id="CHEBI:61557"/>
        <dbReference type="ChEBI" id="CHEBI:140395"/>
        <dbReference type="EC" id="2.7.7.6"/>
    </reaction>
</comment>
<comment type="subunit">
    <text evidence="1">Homodimer. The RNAP catalytic core consists of 2 alpha, 1 beta, 1 beta' and 1 omega subunit. When a sigma factor is associated with the core the holoenzyme is formed, which can initiate transcription.</text>
</comment>
<comment type="domain">
    <text evidence="1">The N-terminal domain is essential for RNAP assembly and basal transcription, whereas the C-terminal domain is involved in interaction with transcriptional regulators and with upstream promoter elements.</text>
</comment>
<comment type="similarity">
    <text evidence="1">Belongs to the RNA polymerase alpha chain family.</text>
</comment>
<accession>Q72I32</accession>
<keyword id="KW-0240">DNA-directed RNA polymerase</keyword>
<keyword id="KW-0548">Nucleotidyltransferase</keyword>
<keyword id="KW-0804">Transcription</keyword>
<keyword id="KW-0808">Transferase</keyword>
<dbReference type="EC" id="2.7.7.6" evidence="1"/>
<dbReference type="EMBL" id="AE017221">
    <property type="protein sequence ID" value="AAS81642.1"/>
    <property type="molecule type" value="Genomic_DNA"/>
</dbReference>
<dbReference type="RefSeq" id="WP_011173698.1">
    <property type="nucleotide sequence ID" value="NC_005835.1"/>
</dbReference>
<dbReference type="BMRB" id="Q72I32"/>
<dbReference type="SMR" id="Q72I32"/>
<dbReference type="GeneID" id="3169128"/>
<dbReference type="KEGG" id="tth:TT_C1300"/>
<dbReference type="eggNOG" id="COG0202">
    <property type="taxonomic scope" value="Bacteria"/>
</dbReference>
<dbReference type="HOGENOM" id="CLU_053084_0_1_0"/>
<dbReference type="OrthoDB" id="9805706at2"/>
<dbReference type="Proteomes" id="UP000000592">
    <property type="component" value="Chromosome"/>
</dbReference>
<dbReference type="GO" id="GO:0005737">
    <property type="term" value="C:cytoplasm"/>
    <property type="evidence" value="ECO:0007669"/>
    <property type="project" value="UniProtKB-ARBA"/>
</dbReference>
<dbReference type="GO" id="GO:0000428">
    <property type="term" value="C:DNA-directed RNA polymerase complex"/>
    <property type="evidence" value="ECO:0007669"/>
    <property type="project" value="UniProtKB-KW"/>
</dbReference>
<dbReference type="GO" id="GO:0003677">
    <property type="term" value="F:DNA binding"/>
    <property type="evidence" value="ECO:0007669"/>
    <property type="project" value="UniProtKB-UniRule"/>
</dbReference>
<dbReference type="GO" id="GO:0003899">
    <property type="term" value="F:DNA-directed RNA polymerase activity"/>
    <property type="evidence" value="ECO:0007669"/>
    <property type="project" value="UniProtKB-UniRule"/>
</dbReference>
<dbReference type="GO" id="GO:0046983">
    <property type="term" value="F:protein dimerization activity"/>
    <property type="evidence" value="ECO:0007669"/>
    <property type="project" value="InterPro"/>
</dbReference>
<dbReference type="GO" id="GO:0006351">
    <property type="term" value="P:DNA-templated transcription"/>
    <property type="evidence" value="ECO:0007669"/>
    <property type="project" value="UniProtKB-UniRule"/>
</dbReference>
<dbReference type="CDD" id="cd06928">
    <property type="entry name" value="RNAP_alpha_NTD"/>
    <property type="match status" value="1"/>
</dbReference>
<dbReference type="FunFam" id="2.170.120.12:FF:000001">
    <property type="entry name" value="DNA-directed RNA polymerase subunit alpha"/>
    <property type="match status" value="1"/>
</dbReference>
<dbReference type="Gene3D" id="1.10.150.20">
    <property type="entry name" value="5' to 3' exonuclease, C-terminal subdomain"/>
    <property type="match status" value="1"/>
</dbReference>
<dbReference type="Gene3D" id="2.170.120.12">
    <property type="entry name" value="DNA-directed RNA polymerase, insert domain"/>
    <property type="match status" value="1"/>
</dbReference>
<dbReference type="Gene3D" id="3.30.1360.10">
    <property type="entry name" value="RNA polymerase, RBP11-like subunit"/>
    <property type="match status" value="1"/>
</dbReference>
<dbReference type="HAMAP" id="MF_00059">
    <property type="entry name" value="RNApol_bact_RpoA"/>
    <property type="match status" value="1"/>
</dbReference>
<dbReference type="InterPro" id="IPR011262">
    <property type="entry name" value="DNA-dir_RNA_pol_insert"/>
</dbReference>
<dbReference type="InterPro" id="IPR011263">
    <property type="entry name" value="DNA-dir_RNA_pol_RpoA/D/Rpb3"/>
</dbReference>
<dbReference type="InterPro" id="IPR011773">
    <property type="entry name" value="DNA-dir_RpoA"/>
</dbReference>
<dbReference type="InterPro" id="IPR036603">
    <property type="entry name" value="RBP11-like"/>
</dbReference>
<dbReference type="InterPro" id="IPR011260">
    <property type="entry name" value="RNAP_asu_C"/>
</dbReference>
<dbReference type="InterPro" id="IPR036643">
    <property type="entry name" value="RNApol_insert_sf"/>
</dbReference>
<dbReference type="NCBIfam" id="NF003513">
    <property type="entry name" value="PRK05182.1-2"/>
    <property type="match status" value="1"/>
</dbReference>
<dbReference type="NCBIfam" id="NF003519">
    <property type="entry name" value="PRK05182.2-5"/>
    <property type="match status" value="1"/>
</dbReference>
<dbReference type="NCBIfam" id="TIGR02027">
    <property type="entry name" value="rpoA"/>
    <property type="match status" value="1"/>
</dbReference>
<dbReference type="Pfam" id="PF01000">
    <property type="entry name" value="RNA_pol_A_bac"/>
    <property type="match status" value="1"/>
</dbReference>
<dbReference type="Pfam" id="PF03118">
    <property type="entry name" value="RNA_pol_A_CTD"/>
    <property type="match status" value="1"/>
</dbReference>
<dbReference type="Pfam" id="PF01193">
    <property type="entry name" value="RNA_pol_L"/>
    <property type="match status" value="1"/>
</dbReference>
<dbReference type="SMART" id="SM00662">
    <property type="entry name" value="RPOLD"/>
    <property type="match status" value="1"/>
</dbReference>
<dbReference type="SUPFAM" id="SSF47789">
    <property type="entry name" value="C-terminal domain of RNA polymerase alpha subunit"/>
    <property type="match status" value="1"/>
</dbReference>
<dbReference type="SUPFAM" id="SSF56553">
    <property type="entry name" value="Insert subdomain of RNA polymerase alpha subunit"/>
    <property type="match status" value="1"/>
</dbReference>
<dbReference type="SUPFAM" id="SSF55257">
    <property type="entry name" value="RBP11-like subunits of RNA polymerase"/>
    <property type="match status" value="1"/>
</dbReference>